<keyword id="KW-0131">Cell cycle</keyword>
<keyword id="KW-0132">Cell division</keyword>
<keyword id="KW-1185">Reference proteome</keyword>
<name>ATX10_DICDI</name>
<reference key="1">
    <citation type="journal article" date="2005" name="Nature">
        <title>The genome of the social amoeba Dictyostelium discoideum.</title>
        <authorList>
            <person name="Eichinger L."/>
            <person name="Pachebat J.A."/>
            <person name="Gloeckner G."/>
            <person name="Rajandream M.A."/>
            <person name="Sucgang R."/>
            <person name="Berriman M."/>
            <person name="Song J."/>
            <person name="Olsen R."/>
            <person name="Szafranski K."/>
            <person name="Xu Q."/>
            <person name="Tunggal B."/>
            <person name="Kummerfeld S."/>
            <person name="Madera M."/>
            <person name="Konfortov B.A."/>
            <person name="Rivero F."/>
            <person name="Bankier A.T."/>
            <person name="Lehmann R."/>
            <person name="Hamlin N."/>
            <person name="Davies R."/>
            <person name="Gaudet P."/>
            <person name="Fey P."/>
            <person name="Pilcher K."/>
            <person name="Chen G."/>
            <person name="Saunders D."/>
            <person name="Sodergren E.J."/>
            <person name="Davis P."/>
            <person name="Kerhornou A."/>
            <person name="Nie X."/>
            <person name="Hall N."/>
            <person name="Anjard C."/>
            <person name="Hemphill L."/>
            <person name="Bason N."/>
            <person name="Farbrother P."/>
            <person name="Desany B."/>
            <person name="Just E."/>
            <person name="Morio T."/>
            <person name="Rost R."/>
            <person name="Churcher C.M."/>
            <person name="Cooper J."/>
            <person name="Haydock S."/>
            <person name="van Driessche N."/>
            <person name="Cronin A."/>
            <person name="Goodhead I."/>
            <person name="Muzny D.M."/>
            <person name="Mourier T."/>
            <person name="Pain A."/>
            <person name="Lu M."/>
            <person name="Harper D."/>
            <person name="Lindsay R."/>
            <person name="Hauser H."/>
            <person name="James K.D."/>
            <person name="Quiles M."/>
            <person name="Madan Babu M."/>
            <person name="Saito T."/>
            <person name="Buchrieser C."/>
            <person name="Wardroper A."/>
            <person name="Felder M."/>
            <person name="Thangavelu M."/>
            <person name="Johnson D."/>
            <person name="Knights A."/>
            <person name="Loulseged H."/>
            <person name="Mungall K.L."/>
            <person name="Oliver K."/>
            <person name="Price C."/>
            <person name="Quail M.A."/>
            <person name="Urushihara H."/>
            <person name="Hernandez J."/>
            <person name="Rabbinowitsch E."/>
            <person name="Steffen D."/>
            <person name="Sanders M."/>
            <person name="Ma J."/>
            <person name="Kohara Y."/>
            <person name="Sharp S."/>
            <person name="Simmonds M.N."/>
            <person name="Spiegler S."/>
            <person name="Tivey A."/>
            <person name="Sugano S."/>
            <person name="White B."/>
            <person name="Walker D."/>
            <person name="Woodward J.R."/>
            <person name="Winckler T."/>
            <person name="Tanaka Y."/>
            <person name="Shaulsky G."/>
            <person name="Schleicher M."/>
            <person name="Weinstock G.M."/>
            <person name="Rosenthal A."/>
            <person name="Cox E.C."/>
            <person name="Chisholm R.L."/>
            <person name="Gibbs R.A."/>
            <person name="Loomis W.F."/>
            <person name="Platzer M."/>
            <person name="Kay R.R."/>
            <person name="Williams J.G."/>
            <person name="Dear P.H."/>
            <person name="Noegel A.A."/>
            <person name="Barrell B.G."/>
            <person name="Kuspa A."/>
        </authorList>
    </citation>
    <scope>NUCLEOTIDE SEQUENCE [LARGE SCALE GENOMIC DNA]</scope>
    <source>
        <strain>AX4</strain>
    </source>
</reference>
<gene>
    <name type="primary">atxn10</name>
    <name type="ORF">DDB_G0268880</name>
</gene>
<protein>
    <recommendedName>
        <fullName>Ataxin-10 homolog</fullName>
    </recommendedName>
</protein>
<organism>
    <name type="scientific">Dictyostelium discoideum</name>
    <name type="common">Social amoeba</name>
    <dbReference type="NCBI Taxonomy" id="44689"/>
    <lineage>
        <taxon>Eukaryota</taxon>
        <taxon>Amoebozoa</taxon>
        <taxon>Evosea</taxon>
        <taxon>Eumycetozoa</taxon>
        <taxon>Dictyostelia</taxon>
        <taxon>Dictyosteliales</taxon>
        <taxon>Dictyosteliaceae</taxon>
        <taxon>Dictyostelium</taxon>
    </lineage>
</organism>
<accession>Q55EI6</accession>
<feature type="chain" id="PRO_0000363973" description="Ataxin-10 homolog">
    <location>
        <begin position="1"/>
        <end position="609"/>
    </location>
</feature>
<feature type="region of interest" description="Disordered" evidence="2">
    <location>
        <begin position="265"/>
        <end position="293"/>
    </location>
</feature>
<feature type="region of interest" description="Disordered" evidence="2">
    <location>
        <begin position="405"/>
        <end position="426"/>
    </location>
</feature>
<feature type="region of interest" description="Disordered" evidence="2">
    <location>
        <begin position="461"/>
        <end position="490"/>
    </location>
</feature>
<feature type="compositionally biased region" description="Low complexity" evidence="2">
    <location>
        <begin position="266"/>
        <end position="292"/>
    </location>
</feature>
<feature type="compositionally biased region" description="Low complexity" evidence="2">
    <location>
        <begin position="466"/>
        <end position="479"/>
    </location>
</feature>
<feature type="compositionally biased region" description="Polar residues" evidence="2">
    <location>
        <begin position="480"/>
        <end position="490"/>
    </location>
</feature>
<dbReference type="EMBL" id="AAFI02000004">
    <property type="protein sequence ID" value="EAL73029.1"/>
    <property type="molecule type" value="Genomic_DNA"/>
</dbReference>
<dbReference type="RefSeq" id="XP_647034.1">
    <property type="nucleotide sequence ID" value="XM_641942.1"/>
</dbReference>
<dbReference type="SMR" id="Q55EI6"/>
<dbReference type="FunCoup" id="Q55EI6">
    <property type="interactions" value="92"/>
</dbReference>
<dbReference type="STRING" id="44689.Q55EI6"/>
<dbReference type="PaxDb" id="44689-DDB0237976"/>
<dbReference type="EnsemblProtists" id="EAL73029">
    <property type="protein sequence ID" value="EAL73029"/>
    <property type="gene ID" value="DDB_G0268880"/>
</dbReference>
<dbReference type="GeneID" id="8616729"/>
<dbReference type="KEGG" id="ddi:DDB_G0268880"/>
<dbReference type="dictyBase" id="DDB_G0268880">
    <property type="gene designation" value="atxn10"/>
</dbReference>
<dbReference type="VEuPathDB" id="AmoebaDB:DDB_G0268880"/>
<dbReference type="eggNOG" id="KOG2676">
    <property type="taxonomic scope" value="Eukaryota"/>
</dbReference>
<dbReference type="HOGENOM" id="CLU_448664_0_0_1"/>
<dbReference type="InParanoid" id="Q55EI6"/>
<dbReference type="OMA" id="FHWIHLI"/>
<dbReference type="PRO" id="PR:Q55EI6"/>
<dbReference type="Proteomes" id="UP000002195">
    <property type="component" value="Chromosome 1"/>
</dbReference>
<dbReference type="GO" id="GO:0005737">
    <property type="term" value="C:cytoplasm"/>
    <property type="evidence" value="ECO:0000250"/>
    <property type="project" value="dictyBase"/>
</dbReference>
<dbReference type="GO" id="GO:0005829">
    <property type="term" value="C:cytosol"/>
    <property type="evidence" value="ECO:0000318"/>
    <property type="project" value="GO_Central"/>
</dbReference>
<dbReference type="GO" id="GO:0051301">
    <property type="term" value="P:cell division"/>
    <property type="evidence" value="ECO:0007669"/>
    <property type="project" value="UniProtKB-KW"/>
</dbReference>
<dbReference type="GO" id="GO:0032465">
    <property type="term" value="P:regulation of cytokinesis"/>
    <property type="evidence" value="ECO:0000250"/>
    <property type="project" value="UniProtKB"/>
</dbReference>
<dbReference type="Gene3D" id="1.25.10.10">
    <property type="entry name" value="Leucine-rich Repeat Variant"/>
    <property type="match status" value="1"/>
</dbReference>
<dbReference type="InterPro" id="IPR011989">
    <property type="entry name" value="ARM-like"/>
</dbReference>
<dbReference type="InterPro" id="IPR016024">
    <property type="entry name" value="ARM-type_fold"/>
</dbReference>
<dbReference type="InterPro" id="IPR051374">
    <property type="entry name" value="Ataxin-10/CTR86_families"/>
</dbReference>
<dbReference type="InterPro" id="IPR019156">
    <property type="entry name" value="Ataxin-10_domain"/>
</dbReference>
<dbReference type="PANTHER" id="PTHR13255">
    <property type="entry name" value="ATAXIN-10"/>
    <property type="match status" value="1"/>
</dbReference>
<dbReference type="PANTHER" id="PTHR13255:SF0">
    <property type="entry name" value="ATAXIN-10"/>
    <property type="match status" value="1"/>
</dbReference>
<dbReference type="Pfam" id="PF09759">
    <property type="entry name" value="Atx10homo_assoc"/>
    <property type="match status" value="1"/>
</dbReference>
<dbReference type="SUPFAM" id="SSF48371">
    <property type="entry name" value="ARM repeat"/>
    <property type="match status" value="1"/>
</dbReference>
<proteinExistence type="inferred from homology"/>
<comment type="function">
    <text evidence="1">May play a role in the regulation of cytokinesis.</text>
</comment>
<comment type="similarity">
    <text evidence="3">Belongs to the ATXN10 family.</text>
</comment>
<sequence>MKVNSTTEIIKSLLECLSKEISNGEDEDTMITDITELFNLSKEFDVRKEISNKHNEFLNILMNYIIKSTTANGDNNEKLFKFNLTSIRFLRNLCANVSENQNIIISNSNFINFIINQLINENNNIKITLNKKNILTSLYQLLINGIVLNDKTQSLLWSNIYPNNLIILIEKYKDNDEFKLLPTNLMLIYNCILNSKDRMKDLVCNKRLVQLIIELIKEDDTFDHEYNTQNFHWIHLISKSLFINDLFIDLYKSLSDNKYSTELVKSTTESTTESTTTESTDSTTDSTTTTTTGKTNKNQVKLLNLLDSIIHDGDKKNIKEYIEKDSIIDLKTCYFMIDELASLYNLDFARKDLKVETQQLTTSLNQSDFDAIFFFIKIFANITSYTEEMLSLSLSIFKPNQIPTKQQEGEEDPVNQILNDPFSKDSAIDPSASKKFDLNTLLRKKGLVAICIGSLHGNYGSDTNKSSSSSSSSSSSTTTDGETVTSKGFNKNIESQDKGFKIELIRILGNLSYKNRGNQDEIRELGGIEIILNHCRFDVNNPYIKEWSVFAIRNLCEDNVENQNLIESLKVKGVANNDELKDLGLEVGVTENGTIKFKNVPKKEKENNQ</sequence>
<evidence type="ECO:0000250" key="1">
    <source>
        <dbReference type="UniProtKB" id="Q9UBB4"/>
    </source>
</evidence>
<evidence type="ECO:0000256" key="2">
    <source>
        <dbReference type="SAM" id="MobiDB-lite"/>
    </source>
</evidence>
<evidence type="ECO:0000305" key="3"/>